<gene>
    <name evidence="9" type="primary">JMJ19</name>
    <name evidence="10" type="synonym">PKDM7A</name>
    <name evidence="12" type="ordered locus">At2g38950</name>
    <name evidence="13" type="ORF">T7F6.12</name>
</gene>
<comment type="subcellular location">
    <subcellularLocation>
        <location evidence="3 5">Nucleus</location>
    </subcellularLocation>
</comment>
<comment type="tissue specificity">
    <text evidence="7">Expressed in inflorescences, roots, siliques, leaves and stems.</text>
</comment>
<comment type="disruption phenotype">
    <text evidence="8">No visible phenotype under normal growth conditions.</text>
</comment>
<comment type="similarity">
    <text evidence="11">Belongs to the JARID1 histone demethylase family.</text>
</comment>
<comment type="caution">
    <text evidence="11">Lacks the 2 conserved His residues involved in iron binding and essential for dioxygenase activity. Its enzyme activity is therefore unsure.</text>
</comment>
<comment type="sequence caution" evidence="11">
    <conflict type="erroneous gene model prediction">
        <sequence resource="EMBL-CDS" id="AAC79608"/>
    </conflict>
</comment>
<dbReference type="EMBL" id="AC005770">
    <property type="protein sequence ID" value="AAC79608.1"/>
    <property type="status" value="ALT_SEQ"/>
    <property type="molecule type" value="Genomic_DNA"/>
</dbReference>
<dbReference type="EMBL" id="CP002685">
    <property type="protein sequence ID" value="AEC09616.1"/>
    <property type="molecule type" value="Genomic_DNA"/>
</dbReference>
<dbReference type="EMBL" id="AY127026">
    <property type="protein sequence ID" value="AAM83250.1"/>
    <property type="molecule type" value="mRNA"/>
</dbReference>
<dbReference type="EMBL" id="BT001088">
    <property type="protein sequence ID" value="AAN46869.1"/>
    <property type="molecule type" value="mRNA"/>
</dbReference>
<dbReference type="PIR" id="D84811">
    <property type="entry name" value="D84811"/>
</dbReference>
<dbReference type="RefSeq" id="NP_181429.2">
    <property type="nucleotide sequence ID" value="NM_129453.4"/>
</dbReference>
<dbReference type="SMR" id="Q8L7T6"/>
<dbReference type="BioGRID" id="3819">
    <property type="interactions" value="3"/>
</dbReference>
<dbReference type="FunCoup" id="Q8L7T6">
    <property type="interactions" value="489"/>
</dbReference>
<dbReference type="IntAct" id="Q8L7T6">
    <property type="interactions" value="2"/>
</dbReference>
<dbReference type="STRING" id="3702.Q8L7T6"/>
<dbReference type="PaxDb" id="3702-AT2G38950.1"/>
<dbReference type="ProteomicsDB" id="232269"/>
<dbReference type="EnsemblPlants" id="AT2G38950.1">
    <property type="protein sequence ID" value="AT2G38950.1"/>
    <property type="gene ID" value="AT2G38950"/>
</dbReference>
<dbReference type="GeneID" id="818480"/>
<dbReference type="Gramene" id="AT2G38950.1">
    <property type="protein sequence ID" value="AT2G38950.1"/>
    <property type="gene ID" value="AT2G38950"/>
</dbReference>
<dbReference type="KEGG" id="ath:AT2G38950"/>
<dbReference type="Araport" id="AT2G38950"/>
<dbReference type="TAIR" id="AT2G38950"/>
<dbReference type="eggNOG" id="KOG1246">
    <property type="taxonomic scope" value="Eukaryota"/>
</dbReference>
<dbReference type="HOGENOM" id="CLU_000991_8_2_1"/>
<dbReference type="InParanoid" id="Q8L7T6"/>
<dbReference type="OMA" id="LYCGMLF"/>
<dbReference type="PhylomeDB" id="Q8L7T6"/>
<dbReference type="PRO" id="PR:Q8L7T6"/>
<dbReference type="Proteomes" id="UP000006548">
    <property type="component" value="Chromosome 2"/>
</dbReference>
<dbReference type="ExpressionAtlas" id="Q8L7T6">
    <property type="expression patterns" value="baseline and differential"/>
</dbReference>
<dbReference type="GO" id="GO:0005634">
    <property type="term" value="C:nucleus"/>
    <property type="evidence" value="ECO:0007669"/>
    <property type="project" value="UniProtKB-SubCell"/>
</dbReference>
<dbReference type="GO" id="GO:0008270">
    <property type="term" value="F:zinc ion binding"/>
    <property type="evidence" value="ECO:0007669"/>
    <property type="project" value="UniProtKB-KW"/>
</dbReference>
<dbReference type="GO" id="GO:0006355">
    <property type="term" value="P:regulation of DNA-templated transcription"/>
    <property type="evidence" value="ECO:0000304"/>
    <property type="project" value="TAIR"/>
</dbReference>
<dbReference type="FunFam" id="2.60.120.650:FF:000062">
    <property type="entry name" value="Probable inactive lysine-specific demethylase JMJ19"/>
    <property type="match status" value="1"/>
</dbReference>
<dbReference type="Gene3D" id="2.60.120.650">
    <property type="entry name" value="Cupin"/>
    <property type="match status" value="1"/>
</dbReference>
<dbReference type="InterPro" id="IPR003347">
    <property type="entry name" value="JmjC_dom"/>
</dbReference>
<dbReference type="InterPro" id="IPR003349">
    <property type="entry name" value="JmjN"/>
</dbReference>
<dbReference type="InterPro" id="IPR004198">
    <property type="entry name" value="Znf_C5HC2"/>
</dbReference>
<dbReference type="PANTHER" id="PTHR10694:SF54">
    <property type="entry name" value="INACTIVE LYSINE-SPECIFIC DEMETHYLASE JMJ19-RELATED"/>
    <property type="match status" value="1"/>
</dbReference>
<dbReference type="PANTHER" id="PTHR10694">
    <property type="entry name" value="LYSINE-SPECIFIC DEMETHYLASE"/>
    <property type="match status" value="1"/>
</dbReference>
<dbReference type="Pfam" id="PF02373">
    <property type="entry name" value="JmjC"/>
    <property type="match status" value="1"/>
</dbReference>
<dbReference type="Pfam" id="PF02375">
    <property type="entry name" value="JmjN"/>
    <property type="match status" value="1"/>
</dbReference>
<dbReference type="Pfam" id="PF02928">
    <property type="entry name" value="zf-C5HC2"/>
    <property type="match status" value="1"/>
</dbReference>
<dbReference type="SMART" id="SM00558">
    <property type="entry name" value="JmjC"/>
    <property type="match status" value="1"/>
</dbReference>
<dbReference type="SMART" id="SM00545">
    <property type="entry name" value="JmjN"/>
    <property type="match status" value="1"/>
</dbReference>
<dbReference type="SUPFAM" id="SSF51197">
    <property type="entry name" value="Clavaminate synthase-like"/>
    <property type="match status" value="1"/>
</dbReference>
<dbReference type="PROSITE" id="PS51184">
    <property type="entry name" value="JMJC"/>
    <property type="match status" value="1"/>
</dbReference>
<dbReference type="PROSITE" id="PS51183">
    <property type="entry name" value="JMJN"/>
    <property type="match status" value="1"/>
</dbReference>
<feature type="chain" id="PRO_0000429997" description="Probable inactive lysine-specific demethylase JMJ19">
    <location>
        <begin position="1"/>
        <end position="708"/>
    </location>
</feature>
<feature type="domain" description="JmjN" evidence="3">
    <location>
        <begin position="108"/>
        <end position="149"/>
    </location>
</feature>
<feature type="domain" description="JmjC" evidence="4">
    <location>
        <begin position="293"/>
        <end position="454"/>
    </location>
</feature>
<feature type="zinc finger region" description="RING-type; degenerate" evidence="2">
    <location>
        <begin position="544"/>
        <end position="581"/>
    </location>
</feature>
<feature type="region of interest" description="Disordered" evidence="6">
    <location>
        <begin position="35"/>
        <end position="59"/>
    </location>
</feature>
<feature type="region of interest" description="Disordered" evidence="6">
    <location>
        <begin position="678"/>
        <end position="708"/>
    </location>
</feature>
<feature type="short sequence motif" description="Nuclear localization signal" evidence="5">
    <location>
        <begin position="646"/>
        <end position="653"/>
    </location>
</feature>
<feature type="compositionally biased region" description="Polar residues" evidence="6">
    <location>
        <begin position="43"/>
        <end position="54"/>
    </location>
</feature>
<feature type="compositionally biased region" description="Basic and acidic residues" evidence="6">
    <location>
        <begin position="678"/>
        <end position="694"/>
    </location>
</feature>
<feature type="binding site" evidence="1">
    <location>
        <position position="544"/>
    </location>
    <ligand>
        <name>Zn(2+)</name>
        <dbReference type="ChEBI" id="CHEBI:29105"/>
        <label>1</label>
    </ligand>
</feature>
<feature type="binding site" evidence="1">
    <location>
        <position position="547"/>
    </location>
    <ligand>
        <name>Zn(2+)</name>
        <dbReference type="ChEBI" id="CHEBI:29105"/>
        <label>1</label>
    </ligand>
</feature>
<feature type="binding site" evidence="1">
    <location>
        <position position="558"/>
    </location>
    <ligand>
        <name>Zn(2+)</name>
        <dbReference type="ChEBI" id="CHEBI:29105"/>
        <label>2</label>
    </ligand>
</feature>
<feature type="binding site" evidence="1">
    <location>
        <position position="560"/>
    </location>
    <ligand>
        <name>Zn(2+)</name>
        <dbReference type="ChEBI" id="CHEBI:29105"/>
        <label>2</label>
    </ligand>
</feature>
<feature type="binding site" evidence="1">
    <location>
        <position position="567"/>
    </location>
    <ligand>
        <name>Zn(2+)</name>
        <dbReference type="ChEBI" id="CHEBI:29105"/>
        <label>1</label>
    </ligand>
</feature>
<feature type="binding site" evidence="1">
    <location>
        <position position="570"/>
    </location>
    <ligand>
        <name>Zn(2+)</name>
        <dbReference type="ChEBI" id="CHEBI:29105"/>
        <label>1</label>
    </ligand>
</feature>
<feature type="binding site" evidence="1">
    <location>
        <position position="575"/>
    </location>
    <ligand>
        <name>Zn(2+)</name>
        <dbReference type="ChEBI" id="CHEBI:29105"/>
        <label>2</label>
    </ligand>
</feature>
<feature type="binding site" evidence="1">
    <location>
        <position position="577"/>
    </location>
    <ligand>
        <name>Zn(2+)</name>
        <dbReference type="ChEBI" id="CHEBI:29105"/>
        <label>2</label>
    </ligand>
</feature>
<name>JMJ19_ARATH</name>
<proteinExistence type="evidence at transcript level"/>
<evidence type="ECO:0000250" key="1">
    <source>
        <dbReference type="UniProtKB" id="Q8GUI6"/>
    </source>
</evidence>
<evidence type="ECO:0000255" key="2">
    <source>
        <dbReference type="PROSITE-ProRule" id="PRU00175"/>
    </source>
</evidence>
<evidence type="ECO:0000255" key="3">
    <source>
        <dbReference type="PROSITE-ProRule" id="PRU00537"/>
    </source>
</evidence>
<evidence type="ECO:0000255" key="4">
    <source>
        <dbReference type="PROSITE-ProRule" id="PRU00538"/>
    </source>
</evidence>
<evidence type="ECO:0000255" key="5">
    <source>
        <dbReference type="PROSITE-ProRule" id="PRU00768"/>
    </source>
</evidence>
<evidence type="ECO:0000256" key="6">
    <source>
        <dbReference type="SAM" id="MobiDB-lite"/>
    </source>
</evidence>
<evidence type="ECO:0000269" key="7">
    <source>
    </source>
</evidence>
<evidence type="ECO:0000269" key="8">
    <source>
    </source>
</evidence>
<evidence type="ECO:0000303" key="9">
    <source>
    </source>
</evidence>
<evidence type="ECO:0000303" key="10">
    <source>
    </source>
</evidence>
<evidence type="ECO:0000305" key="11"/>
<evidence type="ECO:0000312" key="12">
    <source>
        <dbReference type="Araport" id="AT2G38950"/>
    </source>
</evidence>
<evidence type="ECO:0000312" key="13">
    <source>
        <dbReference type="EMBL" id="AAC79608.1"/>
    </source>
</evidence>
<sequence length="708" mass="79304">MGIEGVSTYLKSGNMDTISAPPGFVSQTSFVLRNVPRDKESPRSVSRQEQTTGFGTDDKDSCNMFLKSRPWIVHGHTIPSSEALRPKKTEVRRRRPLKVSETKVLEEAPVFNPTEEEFRDTLSYISSLRDRAEPYGICCVVPPPSWKPPCLLKEKQIWEASTFFPQVQLFGIQTENRKIKKEVDADSNDAASEGVQLCRVERGPGYTLKSFKNFADTYKKSHFGMKDEVLGSENSSPSLKPNELIVADIEKEYRQIVESPLIEIGVLYGNDLDTATFGSGFPLSAPSESSKYSSGWNLNSTAKLPGSLLSLEDCESVCVPRLSVGMCLSSQFWKSEKERLYSLCYLHVGAPRVWYSVAGCHRSKFKAAMKSFILEMSGEQPKKSHNPVMMMSPYQLSVEGIPVTRCVQHPGQYVIIFPGSYYSAFDCGFNCLEKANFAPLDWLPHGDIAVQVNQEMSKTSLISYDKLLFSAAREAVKCLKEYGLSKKNTACYTRWNDSCGTDGLFSNIIKSRIKLEKNRREFLISSLESQRMDKSYDAVNKRECCVCLGDLYLSAVNCSCSANRYSCLNHMRKLCACPCDRKSFLYRYTMDELNLLVEALEGKKLSSMFRWAGIDQKFCASPATTSSKPEEDKGKETDEVTPCNITRKDVAAGTKDQTRVKARSLADILNVKDGNNDAKETLESCSKKSNRPCDNDSSEANAPKKQKQ</sequence>
<accession>Q8L7T6</accession>
<accession>Q9ZV12</accession>
<protein>
    <recommendedName>
        <fullName evidence="11">Probable inactive lysine-specific demethylase JMJ19</fullName>
    </recommendedName>
    <alternativeName>
        <fullName evidence="9">Jumonji domain-containing protein 19</fullName>
        <shortName evidence="9">AtJMJ19</shortName>
        <shortName evidence="9">Protein JUMONJI 19</shortName>
    </alternativeName>
</protein>
<reference key="1">
    <citation type="journal article" date="1999" name="Nature">
        <title>Sequence and analysis of chromosome 2 of the plant Arabidopsis thaliana.</title>
        <authorList>
            <person name="Lin X."/>
            <person name="Kaul S."/>
            <person name="Rounsley S.D."/>
            <person name="Shea T.P."/>
            <person name="Benito M.-I."/>
            <person name="Town C.D."/>
            <person name="Fujii C.Y."/>
            <person name="Mason T.M."/>
            <person name="Bowman C.L."/>
            <person name="Barnstead M.E."/>
            <person name="Feldblyum T.V."/>
            <person name="Buell C.R."/>
            <person name="Ketchum K.A."/>
            <person name="Lee J.J."/>
            <person name="Ronning C.M."/>
            <person name="Koo H.L."/>
            <person name="Moffat K.S."/>
            <person name="Cronin L.A."/>
            <person name="Shen M."/>
            <person name="Pai G."/>
            <person name="Van Aken S."/>
            <person name="Umayam L."/>
            <person name="Tallon L.J."/>
            <person name="Gill J.E."/>
            <person name="Adams M.D."/>
            <person name="Carrera A.J."/>
            <person name="Creasy T.H."/>
            <person name="Goodman H.M."/>
            <person name="Somerville C.R."/>
            <person name="Copenhaver G.P."/>
            <person name="Preuss D."/>
            <person name="Nierman W.C."/>
            <person name="White O."/>
            <person name="Eisen J.A."/>
            <person name="Salzberg S.L."/>
            <person name="Fraser C.M."/>
            <person name="Venter J.C."/>
        </authorList>
    </citation>
    <scope>NUCLEOTIDE SEQUENCE [LARGE SCALE GENOMIC DNA]</scope>
    <source>
        <strain>cv. Columbia</strain>
    </source>
</reference>
<reference key="2">
    <citation type="journal article" date="2017" name="Plant J.">
        <title>Araport11: a complete reannotation of the Arabidopsis thaliana reference genome.</title>
        <authorList>
            <person name="Cheng C.Y."/>
            <person name="Krishnakumar V."/>
            <person name="Chan A.P."/>
            <person name="Thibaud-Nissen F."/>
            <person name="Schobel S."/>
            <person name="Town C.D."/>
        </authorList>
    </citation>
    <scope>GENOME REANNOTATION</scope>
    <source>
        <strain>cv. Columbia</strain>
    </source>
</reference>
<reference key="3">
    <citation type="journal article" date="2003" name="Science">
        <title>Empirical analysis of transcriptional activity in the Arabidopsis genome.</title>
        <authorList>
            <person name="Yamada K."/>
            <person name="Lim J."/>
            <person name="Dale J.M."/>
            <person name="Chen H."/>
            <person name="Shinn P."/>
            <person name="Palm C.J."/>
            <person name="Southwick A.M."/>
            <person name="Wu H.C."/>
            <person name="Kim C.J."/>
            <person name="Nguyen M."/>
            <person name="Pham P.K."/>
            <person name="Cheuk R.F."/>
            <person name="Karlin-Newmann G."/>
            <person name="Liu S.X."/>
            <person name="Lam B."/>
            <person name="Sakano H."/>
            <person name="Wu T."/>
            <person name="Yu G."/>
            <person name="Miranda M."/>
            <person name="Quach H.L."/>
            <person name="Tripp M."/>
            <person name="Chang C.H."/>
            <person name="Lee J.M."/>
            <person name="Toriumi M.J."/>
            <person name="Chan M.M."/>
            <person name="Tang C.C."/>
            <person name="Onodera C.S."/>
            <person name="Deng J.M."/>
            <person name="Akiyama K."/>
            <person name="Ansari Y."/>
            <person name="Arakawa T."/>
            <person name="Banh J."/>
            <person name="Banno F."/>
            <person name="Bowser L."/>
            <person name="Brooks S.Y."/>
            <person name="Carninci P."/>
            <person name="Chao Q."/>
            <person name="Choy N."/>
            <person name="Enju A."/>
            <person name="Goldsmith A.D."/>
            <person name="Gurjal M."/>
            <person name="Hansen N.F."/>
            <person name="Hayashizaki Y."/>
            <person name="Johnson-Hopson C."/>
            <person name="Hsuan V.W."/>
            <person name="Iida K."/>
            <person name="Karnes M."/>
            <person name="Khan S."/>
            <person name="Koesema E."/>
            <person name="Ishida J."/>
            <person name="Jiang P.X."/>
            <person name="Jones T."/>
            <person name="Kawai J."/>
            <person name="Kamiya A."/>
            <person name="Meyers C."/>
            <person name="Nakajima M."/>
            <person name="Narusaka M."/>
            <person name="Seki M."/>
            <person name="Sakurai T."/>
            <person name="Satou M."/>
            <person name="Tamse R."/>
            <person name="Vaysberg M."/>
            <person name="Wallender E.K."/>
            <person name="Wong C."/>
            <person name="Yamamura Y."/>
            <person name="Yuan S."/>
            <person name="Shinozaki K."/>
            <person name="Davis R.W."/>
            <person name="Theologis A."/>
            <person name="Ecker J.R."/>
        </authorList>
    </citation>
    <scope>NUCLEOTIDE SEQUENCE [LARGE SCALE MRNA]</scope>
    <source>
        <strain>cv. Columbia</strain>
    </source>
</reference>
<reference key="4">
    <citation type="journal article" date="2008" name="J. Integr. Plant Biol.">
        <title>Comparative analysis of JmjC domain-containing proteins reveals the potential histone demethylases in Arabidopsis and rice.</title>
        <authorList>
            <person name="Lu F."/>
            <person name="Li G."/>
            <person name="Cui X."/>
            <person name="Liu C."/>
            <person name="Wang X.-J."/>
            <person name="Cao X."/>
        </authorList>
    </citation>
    <scope>GENE FAMILY</scope>
    <scope>NOMENCLATURE</scope>
    <scope>TISSUE SPECIFICITY</scope>
</reference>
<reference key="5">
    <citation type="journal article" date="2010" name="Plant J.">
        <title>A plant-specific histone H3 lysine 4 demethylase represses the floral transition in Arabidopsis.</title>
        <authorList>
            <person name="Yang W."/>
            <person name="Jiang D."/>
            <person name="Jiang J."/>
            <person name="He Y."/>
        </authorList>
    </citation>
    <scope>DISRUPTION PHENOTYPE</scope>
</reference>
<keyword id="KW-0479">Metal-binding</keyword>
<keyword id="KW-0539">Nucleus</keyword>
<keyword id="KW-1185">Reference proteome</keyword>
<keyword id="KW-0804">Transcription</keyword>
<keyword id="KW-0805">Transcription regulation</keyword>
<keyword id="KW-0862">Zinc</keyword>
<keyword id="KW-0863">Zinc-finger</keyword>
<organism>
    <name type="scientific">Arabidopsis thaliana</name>
    <name type="common">Mouse-ear cress</name>
    <dbReference type="NCBI Taxonomy" id="3702"/>
    <lineage>
        <taxon>Eukaryota</taxon>
        <taxon>Viridiplantae</taxon>
        <taxon>Streptophyta</taxon>
        <taxon>Embryophyta</taxon>
        <taxon>Tracheophyta</taxon>
        <taxon>Spermatophyta</taxon>
        <taxon>Magnoliopsida</taxon>
        <taxon>eudicotyledons</taxon>
        <taxon>Gunneridae</taxon>
        <taxon>Pentapetalae</taxon>
        <taxon>rosids</taxon>
        <taxon>malvids</taxon>
        <taxon>Brassicales</taxon>
        <taxon>Brassicaceae</taxon>
        <taxon>Camelineae</taxon>
        <taxon>Arabidopsis</taxon>
    </lineage>
</organism>